<gene>
    <name evidence="1" type="primary">hfq</name>
    <name type="ordered locus">SFV_4330</name>
</gene>
<keyword id="KW-0694">RNA-binding</keyword>
<keyword id="KW-0346">Stress response</keyword>
<reference key="1">
    <citation type="journal article" date="2006" name="BMC Genomics">
        <title>Complete genome sequence of Shigella flexneri 5b and comparison with Shigella flexneri 2a.</title>
        <authorList>
            <person name="Nie H."/>
            <person name="Yang F."/>
            <person name="Zhang X."/>
            <person name="Yang J."/>
            <person name="Chen L."/>
            <person name="Wang J."/>
            <person name="Xiong Z."/>
            <person name="Peng J."/>
            <person name="Sun L."/>
            <person name="Dong J."/>
            <person name="Xue Y."/>
            <person name="Xu X."/>
            <person name="Chen S."/>
            <person name="Yao Z."/>
            <person name="Shen Y."/>
            <person name="Jin Q."/>
        </authorList>
    </citation>
    <scope>NUCLEOTIDE SEQUENCE [LARGE SCALE GENOMIC DNA]</scope>
    <source>
        <strain>8401</strain>
    </source>
</reference>
<feature type="chain" id="PRO_1000025939" description="RNA-binding protein Hfq">
    <location>
        <begin position="1"/>
        <end position="102"/>
    </location>
</feature>
<feature type="domain" description="Sm" evidence="2">
    <location>
        <begin position="9"/>
        <end position="68"/>
    </location>
</feature>
<feature type="region of interest" description="Disordered" evidence="3">
    <location>
        <begin position="63"/>
        <end position="102"/>
    </location>
</feature>
<feature type="compositionally biased region" description="Polar residues" evidence="3">
    <location>
        <begin position="70"/>
        <end position="96"/>
    </location>
</feature>
<comment type="function">
    <text evidence="1">RNA chaperone that binds small regulatory RNA (sRNAs) and mRNAs to facilitate mRNA translational regulation in response to envelope stress, environmental stress and changes in metabolite concentrations. Also binds with high specificity to tRNAs.</text>
</comment>
<comment type="subunit">
    <text evidence="1">Homohexamer.</text>
</comment>
<comment type="similarity">
    <text evidence="1">Belongs to the Hfq family.</text>
</comment>
<evidence type="ECO:0000255" key="1">
    <source>
        <dbReference type="HAMAP-Rule" id="MF_00436"/>
    </source>
</evidence>
<evidence type="ECO:0000255" key="2">
    <source>
        <dbReference type="PROSITE-ProRule" id="PRU01346"/>
    </source>
</evidence>
<evidence type="ECO:0000256" key="3">
    <source>
        <dbReference type="SAM" id="MobiDB-lite"/>
    </source>
</evidence>
<name>HFQ_SHIF8</name>
<accession>Q0SXB0</accession>
<sequence length="102" mass="11166">MAKGQSLQDPFLNALRRERVPVSIYLVNGIKLQGQIESFDQFVILLKNTVSQMVYKHAISTVVPSRPVSHHSNNAGGGTSSNYHHGSSAQNTSAQQDSEETE</sequence>
<protein>
    <recommendedName>
        <fullName evidence="1">RNA-binding protein Hfq</fullName>
    </recommendedName>
</protein>
<proteinExistence type="inferred from homology"/>
<organism>
    <name type="scientific">Shigella flexneri serotype 5b (strain 8401)</name>
    <dbReference type="NCBI Taxonomy" id="373384"/>
    <lineage>
        <taxon>Bacteria</taxon>
        <taxon>Pseudomonadati</taxon>
        <taxon>Pseudomonadota</taxon>
        <taxon>Gammaproteobacteria</taxon>
        <taxon>Enterobacterales</taxon>
        <taxon>Enterobacteriaceae</taxon>
        <taxon>Shigella</taxon>
    </lineage>
</organism>
<dbReference type="EMBL" id="CP000266">
    <property type="protein sequence ID" value="ABF06305.1"/>
    <property type="molecule type" value="Genomic_DNA"/>
</dbReference>
<dbReference type="RefSeq" id="WP_001051883.1">
    <property type="nucleotide sequence ID" value="NC_008258.1"/>
</dbReference>
<dbReference type="SMR" id="Q0SXB0"/>
<dbReference type="GeneID" id="93777649"/>
<dbReference type="KEGG" id="sfv:SFV_4330"/>
<dbReference type="HOGENOM" id="CLU_113688_2_1_6"/>
<dbReference type="Proteomes" id="UP000000659">
    <property type="component" value="Chromosome"/>
</dbReference>
<dbReference type="GO" id="GO:0005829">
    <property type="term" value="C:cytosol"/>
    <property type="evidence" value="ECO:0007669"/>
    <property type="project" value="TreeGrafter"/>
</dbReference>
<dbReference type="GO" id="GO:0003723">
    <property type="term" value="F:RNA binding"/>
    <property type="evidence" value="ECO:0007669"/>
    <property type="project" value="UniProtKB-UniRule"/>
</dbReference>
<dbReference type="GO" id="GO:0006355">
    <property type="term" value="P:regulation of DNA-templated transcription"/>
    <property type="evidence" value="ECO:0007669"/>
    <property type="project" value="InterPro"/>
</dbReference>
<dbReference type="GO" id="GO:0043487">
    <property type="term" value="P:regulation of RNA stability"/>
    <property type="evidence" value="ECO:0007669"/>
    <property type="project" value="TreeGrafter"/>
</dbReference>
<dbReference type="GO" id="GO:0045974">
    <property type="term" value="P:regulation of translation, ncRNA-mediated"/>
    <property type="evidence" value="ECO:0007669"/>
    <property type="project" value="TreeGrafter"/>
</dbReference>
<dbReference type="CDD" id="cd01716">
    <property type="entry name" value="Hfq"/>
    <property type="match status" value="1"/>
</dbReference>
<dbReference type="FunFam" id="2.30.30.100:FF:000001">
    <property type="entry name" value="RNA-binding protein Hfq"/>
    <property type="match status" value="1"/>
</dbReference>
<dbReference type="Gene3D" id="2.30.30.100">
    <property type="match status" value="1"/>
</dbReference>
<dbReference type="HAMAP" id="MF_00436">
    <property type="entry name" value="Hfq"/>
    <property type="match status" value="1"/>
</dbReference>
<dbReference type="InterPro" id="IPR005001">
    <property type="entry name" value="Hfq"/>
</dbReference>
<dbReference type="InterPro" id="IPR010920">
    <property type="entry name" value="LSM_dom_sf"/>
</dbReference>
<dbReference type="InterPro" id="IPR047575">
    <property type="entry name" value="Sm"/>
</dbReference>
<dbReference type="NCBIfam" id="TIGR02383">
    <property type="entry name" value="Hfq"/>
    <property type="match status" value="1"/>
</dbReference>
<dbReference type="NCBIfam" id="NF001602">
    <property type="entry name" value="PRK00395.1"/>
    <property type="match status" value="1"/>
</dbReference>
<dbReference type="PANTHER" id="PTHR34772">
    <property type="entry name" value="RNA-BINDING PROTEIN HFQ"/>
    <property type="match status" value="1"/>
</dbReference>
<dbReference type="PANTHER" id="PTHR34772:SF1">
    <property type="entry name" value="RNA-BINDING PROTEIN HFQ"/>
    <property type="match status" value="1"/>
</dbReference>
<dbReference type="Pfam" id="PF17209">
    <property type="entry name" value="Hfq"/>
    <property type="match status" value="1"/>
</dbReference>
<dbReference type="SUPFAM" id="SSF50182">
    <property type="entry name" value="Sm-like ribonucleoproteins"/>
    <property type="match status" value="1"/>
</dbReference>
<dbReference type="PROSITE" id="PS52002">
    <property type="entry name" value="SM"/>
    <property type="match status" value="1"/>
</dbReference>